<evidence type="ECO:0000255" key="1">
    <source>
        <dbReference type="HAMAP-Rule" id="MF_01321"/>
    </source>
</evidence>
<feature type="chain" id="PRO_0000300448" description="DNA-directed RNA polymerase subunit beta">
    <location>
        <begin position="1"/>
        <end position="1070"/>
    </location>
</feature>
<geneLocation type="chloroplast"/>
<dbReference type="EC" id="2.7.7.6" evidence="1"/>
<dbReference type="EMBL" id="DQ923117">
    <property type="protein sequence ID" value="ABI49855.1"/>
    <property type="molecule type" value="Genomic_DNA"/>
</dbReference>
<dbReference type="RefSeq" id="YP_740642.1">
    <property type="nucleotide sequence ID" value="NC_008336.1"/>
</dbReference>
<dbReference type="SMR" id="Q09FW9"/>
<dbReference type="GeneID" id="4271572"/>
<dbReference type="GO" id="GO:0009507">
    <property type="term" value="C:chloroplast"/>
    <property type="evidence" value="ECO:0007669"/>
    <property type="project" value="UniProtKB-SubCell"/>
</dbReference>
<dbReference type="GO" id="GO:0000428">
    <property type="term" value="C:DNA-directed RNA polymerase complex"/>
    <property type="evidence" value="ECO:0007669"/>
    <property type="project" value="UniProtKB-KW"/>
</dbReference>
<dbReference type="GO" id="GO:0005739">
    <property type="term" value="C:mitochondrion"/>
    <property type="evidence" value="ECO:0007669"/>
    <property type="project" value="GOC"/>
</dbReference>
<dbReference type="GO" id="GO:0003677">
    <property type="term" value="F:DNA binding"/>
    <property type="evidence" value="ECO:0007669"/>
    <property type="project" value="UniProtKB-UniRule"/>
</dbReference>
<dbReference type="GO" id="GO:0003899">
    <property type="term" value="F:DNA-directed RNA polymerase activity"/>
    <property type="evidence" value="ECO:0007669"/>
    <property type="project" value="UniProtKB-UniRule"/>
</dbReference>
<dbReference type="GO" id="GO:0032549">
    <property type="term" value="F:ribonucleoside binding"/>
    <property type="evidence" value="ECO:0007669"/>
    <property type="project" value="InterPro"/>
</dbReference>
<dbReference type="GO" id="GO:0006351">
    <property type="term" value="P:DNA-templated transcription"/>
    <property type="evidence" value="ECO:0007669"/>
    <property type="project" value="UniProtKB-UniRule"/>
</dbReference>
<dbReference type="CDD" id="cd00653">
    <property type="entry name" value="RNA_pol_B_RPB2"/>
    <property type="match status" value="1"/>
</dbReference>
<dbReference type="FunFam" id="3.90.1110.10:FF:000009">
    <property type="entry name" value="DNA-directed RNA polymerase subunit beta"/>
    <property type="match status" value="1"/>
</dbReference>
<dbReference type="Gene3D" id="2.40.50.100">
    <property type="match status" value="1"/>
</dbReference>
<dbReference type="Gene3D" id="2.40.50.150">
    <property type="match status" value="1"/>
</dbReference>
<dbReference type="Gene3D" id="3.90.1100.10">
    <property type="match status" value="1"/>
</dbReference>
<dbReference type="Gene3D" id="2.30.150.10">
    <property type="entry name" value="DNA-directed RNA polymerase, beta subunit, external 1 domain"/>
    <property type="match status" value="1"/>
</dbReference>
<dbReference type="Gene3D" id="2.40.270.10">
    <property type="entry name" value="DNA-directed RNA polymerase, subunit 2, domain 6"/>
    <property type="match status" value="2"/>
</dbReference>
<dbReference type="Gene3D" id="3.90.1800.10">
    <property type="entry name" value="RNA polymerase alpha subunit dimerisation domain"/>
    <property type="match status" value="1"/>
</dbReference>
<dbReference type="Gene3D" id="3.90.1110.10">
    <property type="entry name" value="RNA polymerase Rpb2, domain 2"/>
    <property type="match status" value="1"/>
</dbReference>
<dbReference type="HAMAP" id="MF_01321">
    <property type="entry name" value="RNApol_bact_RpoB"/>
    <property type="match status" value="1"/>
</dbReference>
<dbReference type="InterPro" id="IPR042107">
    <property type="entry name" value="DNA-dir_RNA_pol_bsu_ext_1_sf"/>
</dbReference>
<dbReference type="InterPro" id="IPR015712">
    <property type="entry name" value="DNA-dir_RNA_pol_su2"/>
</dbReference>
<dbReference type="InterPro" id="IPR007120">
    <property type="entry name" value="DNA-dir_RNAP_su2_dom"/>
</dbReference>
<dbReference type="InterPro" id="IPR037033">
    <property type="entry name" value="DNA-dir_RNAP_su2_hyb_sf"/>
</dbReference>
<dbReference type="InterPro" id="IPR010243">
    <property type="entry name" value="RNA_pol_bsu_bac"/>
</dbReference>
<dbReference type="InterPro" id="IPR007121">
    <property type="entry name" value="RNA_pol_bsu_CS"/>
</dbReference>
<dbReference type="InterPro" id="IPR007642">
    <property type="entry name" value="RNA_pol_Rpb2_2"/>
</dbReference>
<dbReference type="InterPro" id="IPR037034">
    <property type="entry name" value="RNA_pol_Rpb2_2_sf"/>
</dbReference>
<dbReference type="InterPro" id="IPR007645">
    <property type="entry name" value="RNA_pol_Rpb2_3"/>
</dbReference>
<dbReference type="InterPro" id="IPR007641">
    <property type="entry name" value="RNA_pol_Rpb2_7"/>
</dbReference>
<dbReference type="InterPro" id="IPR014724">
    <property type="entry name" value="RNA_pol_RPB2_OB-fold"/>
</dbReference>
<dbReference type="NCBIfam" id="NF001616">
    <property type="entry name" value="PRK00405.1"/>
    <property type="match status" value="1"/>
</dbReference>
<dbReference type="PANTHER" id="PTHR20856">
    <property type="entry name" value="DNA-DIRECTED RNA POLYMERASE I SUBUNIT 2"/>
    <property type="match status" value="1"/>
</dbReference>
<dbReference type="Pfam" id="PF04561">
    <property type="entry name" value="RNA_pol_Rpb2_2"/>
    <property type="match status" value="1"/>
</dbReference>
<dbReference type="Pfam" id="PF04565">
    <property type="entry name" value="RNA_pol_Rpb2_3"/>
    <property type="match status" value="1"/>
</dbReference>
<dbReference type="Pfam" id="PF00562">
    <property type="entry name" value="RNA_pol_Rpb2_6"/>
    <property type="match status" value="1"/>
</dbReference>
<dbReference type="Pfam" id="PF04560">
    <property type="entry name" value="RNA_pol_Rpb2_7"/>
    <property type="match status" value="1"/>
</dbReference>
<dbReference type="SUPFAM" id="SSF64484">
    <property type="entry name" value="beta and beta-prime subunits of DNA dependent RNA-polymerase"/>
    <property type="match status" value="1"/>
</dbReference>
<dbReference type="PROSITE" id="PS01166">
    <property type="entry name" value="RNA_POL_BETA"/>
    <property type="match status" value="1"/>
</dbReference>
<name>RPOB_NANDO</name>
<comment type="function">
    <text evidence="1">DNA-dependent RNA polymerase catalyzes the transcription of DNA into RNA using the four ribonucleoside triphosphates as substrates.</text>
</comment>
<comment type="catalytic activity">
    <reaction evidence="1">
        <text>RNA(n) + a ribonucleoside 5'-triphosphate = RNA(n+1) + diphosphate</text>
        <dbReference type="Rhea" id="RHEA:21248"/>
        <dbReference type="Rhea" id="RHEA-COMP:14527"/>
        <dbReference type="Rhea" id="RHEA-COMP:17342"/>
        <dbReference type="ChEBI" id="CHEBI:33019"/>
        <dbReference type="ChEBI" id="CHEBI:61557"/>
        <dbReference type="ChEBI" id="CHEBI:140395"/>
        <dbReference type="EC" id="2.7.7.6"/>
    </reaction>
</comment>
<comment type="subunit">
    <text evidence="1">In plastids the minimal PEP RNA polymerase catalytic core is composed of four subunits: alpha, beta, beta', and beta''. When a (nuclear-encoded) sigma factor is associated with the core the holoenzyme is formed, which can initiate transcription.</text>
</comment>
<comment type="subcellular location">
    <subcellularLocation>
        <location>Plastid</location>
        <location>Chloroplast</location>
    </subcellularLocation>
</comment>
<comment type="similarity">
    <text evidence="1">Belongs to the RNA polymerase beta chain family.</text>
</comment>
<reference key="1">
    <citation type="journal article" date="2006" name="BMC Plant Biol.">
        <title>Rapid and accurate pyrosequencing of angiosperm plastid genomes.</title>
        <authorList>
            <person name="Moore M.J."/>
            <person name="Dhingra A."/>
            <person name="Soltis P.S."/>
            <person name="Shaw R."/>
            <person name="Farmerie W.G."/>
            <person name="Folta K.M."/>
            <person name="Soltis D.E."/>
        </authorList>
    </citation>
    <scope>NUCLEOTIDE SEQUENCE [LARGE SCALE GENOMIC DNA]</scope>
</reference>
<organism>
    <name type="scientific">Nandina domestica</name>
    <name type="common">Heavenly bamboo</name>
    <dbReference type="NCBI Taxonomy" id="41776"/>
    <lineage>
        <taxon>Eukaryota</taxon>
        <taxon>Viridiplantae</taxon>
        <taxon>Streptophyta</taxon>
        <taxon>Embryophyta</taxon>
        <taxon>Tracheophyta</taxon>
        <taxon>Spermatophyta</taxon>
        <taxon>Magnoliopsida</taxon>
        <taxon>Ranunculales</taxon>
        <taxon>Berberidaceae</taxon>
        <taxon>Nandinoideae</taxon>
        <taxon>Nandineae</taxon>
        <taxon>Nandina</taxon>
    </lineage>
</organism>
<keyword id="KW-0150">Chloroplast</keyword>
<keyword id="KW-0240">DNA-directed RNA polymerase</keyword>
<keyword id="KW-0548">Nucleotidyltransferase</keyword>
<keyword id="KW-0934">Plastid</keyword>
<keyword id="KW-0804">Transcription</keyword>
<keyword id="KW-0808">Transferase</keyword>
<gene>
    <name evidence="1" type="primary">rpoB</name>
</gene>
<proteinExistence type="inferred from homology"/>
<protein>
    <recommendedName>
        <fullName evidence="1">DNA-directed RNA polymerase subunit beta</fullName>
        <ecNumber evidence="1">2.7.7.6</ecNumber>
    </recommendedName>
    <alternativeName>
        <fullName evidence="1">PEP</fullName>
    </alternativeName>
    <alternativeName>
        <fullName evidence="1">Plastid-encoded RNA polymerase subunit beta</fullName>
        <shortName evidence="1">RNA polymerase subunit beta</shortName>
    </alternativeName>
</protein>
<sequence length="1070" mass="120216">MLRDANEGMSTIPGFSQIQFEGFCRFIDRGLMEELNKFPKIEDTDQEIEFQLFVETYQLVEPLIKERDAVHESLTYCSELYVPAGLIWKTGKDIQEQTIFIGNIPLMNSLGTSIVNGIYRIVINQILQSPGIYYRSELDHNGISVYTGTIISDWGGRSELEIDRKARIWARVSRKQKISILVPSSAMGSNLKEIIDNVCYPEIFLSFPNDKEKKKIGSKENAILEFYQQFACVGGDPVFSESLCKELQKKFFQQRCELGRIGRRNMNRRLNLDIPHNITFLLPRDVLAAADHLIGMKFGMGTLDDMNHLKNKRIRSVADLLQDQFGLAMVRLENAVRGTIGGAIRQKLIPTPHNLVTSTPLTTTYESFFGLHPLSQVLDRTNPLTQIVHGRKSSYLGPGGLTGRTASFRIRDIHPSHYGRICPIDTSEGINVGLIGSLAIHARIGHWGSLERPFYEISERSKGVRVIYLSPSIDEYYMVTAGNSLALNHGIQEEQVVPARYRQEFLTIAWEQIQLRSIFPFQYFSVGASLIPFIEHNDANRALMSSNMQRQAVPLSRSEKCIVGTGLERQAALDSGVSAIAEHEGKIIYTDTDKIILSGNGATLSIPLVMYQRSNKNTCMHQKPQVSRGKCIKKGQILADGAATVGGELALGKNVLVAYMPWEGYNFEDAVLISERLVYGDIYTSFHIRKYEIQTHVTSQGPERITNEIPHLEAHLLRNLDRNGIVMLGSWVETGDILVGKLTPQVAKESSYAPEDRLLRAILGIQVSTAKETCLKLPIGGRGRVIDVRWIHKKGGSSYNPETIRVYISQKREIKVGDKVAGRHGNKGIISKILPRQDMPYLQDGTPVDMVFNPLGVPSRMNVGQIFECSLGLAGGLLDRHYRIAPFDERYEQEASRKLVFSELYEASKQTANPWVFEPEYPGKSRIFDGRTGDPFAQPVIIGKSYILKLIHQVDDKIHGRSSGHYALVTQQPLRGRAKQGGQRVGEMEVWALEGFGVAHILQEMLTYKSDHIRARQEVLGTTIIGGTIPNPEDAPESFRLLVRELRSLALELNHFLVSEKNFQINRKEA</sequence>
<accession>Q09FW9</accession>